<protein>
    <recommendedName>
        <fullName evidence="1">N-(5'-phosphoribosyl)anthranilate isomerase</fullName>
        <shortName evidence="1">PRAI</shortName>
        <ecNumber evidence="1">5.3.1.24</ecNumber>
    </recommendedName>
</protein>
<evidence type="ECO:0000255" key="1">
    <source>
        <dbReference type="HAMAP-Rule" id="MF_00135"/>
    </source>
</evidence>
<gene>
    <name evidence="1" type="primary">trpF</name>
    <name type="ordered locus">MmarC5_0590</name>
</gene>
<sequence length="208" mass="23202">MFIKICGIKTPEELEIVENYGNATGVILECVSKRRIGFETAKNLVNLANIPVFAVSTTSDVSVWENIIELTGTNYLQMHSDIDQKAIDFIKNEYGCFIMKSFKIPEKSESPENDAQKIISDIESYEVDRILLDTGKGCGQTHDHRISQILAKKFDIVLAGGLDPDNVLKIVKTVKPFGVDVSSGVENNNSKDEELIKRFCENVKSVKL</sequence>
<proteinExistence type="inferred from homology"/>
<accession>A4FXH5</accession>
<name>TRPF_METM5</name>
<dbReference type="EC" id="5.3.1.24" evidence="1"/>
<dbReference type="EMBL" id="CP000609">
    <property type="protein sequence ID" value="ABO34904.1"/>
    <property type="molecule type" value="Genomic_DNA"/>
</dbReference>
<dbReference type="RefSeq" id="WP_011868358.1">
    <property type="nucleotide sequence ID" value="NC_009135.1"/>
</dbReference>
<dbReference type="SMR" id="A4FXH5"/>
<dbReference type="STRING" id="402880.MmarC5_0590"/>
<dbReference type="GeneID" id="4929305"/>
<dbReference type="KEGG" id="mmq:MmarC5_0590"/>
<dbReference type="eggNOG" id="arCOG01983">
    <property type="taxonomic scope" value="Archaea"/>
</dbReference>
<dbReference type="HOGENOM" id="CLU_076364_2_1_2"/>
<dbReference type="OrthoDB" id="27513at2157"/>
<dbReference type="UniPathway" id="UPA00035">
    <property type="reaction ID" value="UER00042"/>
</dbReference>
<dbReference type="Proteomes" id="UP000000253">
    <property type="component" value="Chromosome"/>
</dbReference>
<dbReference type="GO" id="GO:0004640">
    <property type="term" value="F:phosphoribosylanthranilate isomerase activity"/>
    <property type="evidence" value="ECO:0007669"/>
    <property type="project" value="UniProtKB-UniRule"/>
</dbReference>
<dbReference type="GO" id="GO:0000162">
    <property type="term" value="P:L-tryptophan biosynthetic process"/>
    <property type="evidence" value="ECO:0007669"/>
    <property type="project" value="UniProtKB-UniRule"/>
</dbReference>
<dbReference type="CDD" id="cd00405">
    <property type="entry name" value="PRAI"/>
    <property type="match status" value="1"/>
</dbReference>
<dbReference type="Gene3D" id="3.20.20.70">
    <property type="entry name" value="Aldolase class I"/>
    <property type="match status" value="1"/>
</dbReference>
<dbReference type="HAMAP" id="MF_00135">
    <property type="entry name" value="PRAI"/>
    <property type="match status" value="1"/>
</dbReference>
<dbReference type="InterPro" id="IPR013785">
    <property type="entry name" value="Aldolase_TIM"/>
</dbReference>
<dbReference type="InterPro" id="IPR001240">
    <property type="entry name" value="PRAI_dom"/>
</dbReference>
<dbReference type="InterPro" id="IPR011060">
    <property type="entry name" value="RibuloseP-bd_barrel"/>
</dbReference>
<dbReference type="InterPro" id="IPR044643">
    <property type="entry name" value="TrpF_fam"/>
</dbReference>
<dbReference type="NCBIfam" id="NF002304">
    <property type="entry name" value="PRK01222.2-4"/>
    <property type="match status" value="1"/>
</dbReference>
<dbReference type="PANTHER" id="PTHR42894">
    <property type="entry name" value="N-(5'-PHOSPHORIBOSYL)ANTHRANILATE ISOMERASE"/>
    <property type="match status" value="1"/>
</dbReference>
<dbReference type="PANTHER" id="PTHR42894:SF1">
    <property type="entry name" value="N-(5'-PHOSPHORIBOSYL)ANTHRANILATE ISOMERASE"/>
    <property type="match status" value="1"/>
</dbReference>
<dbReference type="Pfam" id="PF00697">
    <property type="entry name" value="PRAI"/>
    <property type="match status" value="1"/>
</dbReference>
<dbReference type="SUPFAM" id="SSF51366">
    <property type="entry name" value="Ribulose-phoshate binding barrel"/>
    <property type="match status" value="1"/>
</dbReference>
<comment type="catalytic activity">
    <reaction evidence="1">
        <text>N-(5-phospho-beta-D-ribosyl)anthranilate = 1-(2-carboxyphenylamino)-1-deoxy-D-ribulose 5-phosphate</text>
        <dbReference type="Rhea" id="RHEA:21540"/>
        <dbReference type="ChEBI" id="CHEBI:18277"/>
        <dbReference type="ChEBI" id="CHEBI:58613"/>
        <dbReference type="EC" id="5.3.1.24"/>
    </reaction>
</comment>
<comment type="pathway">
    <text evidence="1">Amino-acid biosynthesis; L-tryptophan biosynthesis; L-tryptophan from chorismate: step 3/5.</text>
</comment>
<comment type="similarity">
    <text evidence="1">Belongs to the TrpF family.</text>
</comment>
<feature type="chain" id="PRO_1000057877" description="N-(5'-phosphoribosyl)anthranilate isomerase">
    <location>
        <begin position="1"/>
        <end position="208"/>
    </location>
</feature>
<keyword id="KW-0028">Amino-acid biosynthesis</keyword>
<keyword id="KW-0057">Aromatic amino acid biosynthesis</keyword>
<keyword id="KW-0413">Isomerase</keyword>
<keyword id="KW-0822">Tryptophan biosynthesis</keyword>
<reference key="1">
    <citation type="submission" date="2007-03" db="EMBL/GenBank/DDBJ databases">
        <title>Complete sequence of chromosome of Methanococcus maripaludis C5.</title>
        <authorList>
            <consortium name="US DOE Joint Genome Institute"/>
            <person name="Copeland A."/>
            <person name="Lucas S."/>
            <person name="Lapidus A."/>
            <person name="Barry K."/>
            <person name="Glavina del Rio T."/>
            <person name="Dalin E."/>
            <person name="Tice H."/>
            <person name="Pitluck S."/>
            <person name="Chertkov O."/>
            <person name="Brettin T."/>
            <person name="Bruce D."/>
            <person name="Han C."/>
            <person name="Detter J.C."/>
            <person name="Schmutz J."/>
            <person name="Larimer F."/>
            <person name="Land M."/>
            <person name="Hauser L."/>
            <person name="Kyrpides N."/>
            <person name="Mikhailova N."/>
            <person name="Sieprawska-Lupa M."/>
            <person name="Whitman W.B."/>
            <person name="Richardson P."/>
        </authorList>
    </citation>
    <scope>NUCLEOTIDE SEQUENCE [LARGE SCALE GENOMIC DNA]</scope>
    <source>
        <strain>C5 / ATCC BAA-1333</strain>
    </source>
</reference>
<organism>
    <name type="scientific">Methanococcus maripaludis (strain C5 / ATCC BAA-1333)</name>
    <dbReference type="NCBI Taxonomy" id="402880"/>
    <lineage>
        <taxon>Archaea</taxon>
        <taxon>Methanobacteriati</taxon>
        <taxon>Methanobacteriota</taxon>
        <taxon>Methanomada group</taxon>
        <taxon>Methanococci</taxon>
        <taxon>Methanococcales</taxon>
        <taxon>Methanococcaceae</taxon>
        <taxon>Methanococcus</taxon>
    </lineage>
</organism>